<evidence type="ECO:0000255" key="1">
    <source>
        <dbReference type="HAMAP-Rule" id="MF_00104"/>
    </source>
</evidence>
<evidence type="ECO:0000305" key="2"/>
<keyword id="KW-0963">Cytoplasm</keyword>
<keyword id="KW-0255">Endonuclease</keyword>
<keyword id="KW-0378">Hydrolase</keyword>
<keyword id="KW-0460">Magnesium</keyword>
<keyword id="KW-0479">Metal-binding</keyword>
<keyword id="KW-0507">mRNA processing</keyword>
<keyword id="KW-0540">Nuclease</keyword>
<keyword id="KW-1185">Reference proteome</keyword>
<keyword id="KW-0694">RNA-binding</keyword>
<keyword id="KW-0698">rRNA processing</keyword>
<keyword id="KW-0699">rRNA-binding</keyword>
<keyword id="KW-0819">tRNA processing</keyword>
<proteinExistence type="inferred from homology"/>
<name>RNC_COXBU</name>
<gene>
    <name evidence="1" type="primary">rnc</name>
    <name type="ordered locus">CBU_1503</name>
</gene>
<sequence length="233" mass="26199">MNHLNKLMERLGHQFNNLELLKIALTHCSSGADNNERLEFLGDSVLGFIIASELYQRRPQAREGDLSRMRASMVNGDELAQMSTKLGINEYLQLGVGEQKSGGKRRRSILADALEAIVGAIYIDAGLETCRRCVLNWYGERVDDLSKLSPKKDAKSLLQEWLQARRLPLPTYEVKITGEAHAQTFTVNCYVKGLPHKTEGVNTTRRRAEQIAAKRFLELLDDGKGDGITERDQ</sequence>
<comment type="function">
    <text evidence="1">Digests double-stranded RNA. Involved in the processing of primary rRNA transcript to yield the immediate precursors to the large and small rRNAs (23S and 16S). Processes some mRNAs, and tRNAs when they are encoded in the rRNA operon. Processes pre-crRNA and tracrRNA of type II CRISPR loci if present in the organism.</text>
</comment>
<comment type="catalytic activity">
    <reaction evidence="1">
        <text>Endonucleolytic cleavage to 5'-phosphomonoester.</text>
        <dbReference type="EC" id="3.1.26.3"/>
    </reaction>
</comment>
<comment type="cofactor">
    <cofactor evidence="1">
        <name>Mg(2+)</name>
        <dbReference type="ChEBI" id="CHEBI:18420"/>
    </cofactor>
</comment>
<comment type="subunit">
    <text evidence="1">Homodimer.</text>
</comment>
<comment type="subcellular location">
    <subcellularLocation>
        <location>Cytoplasm</location>
    </subcellularLocation>
</comment>
<comment type="similarity">
    <text evidence="1">Belongs to the ribonuclease III family.</text>
</comment>
<feature type="chain" id="PRO_0000180394" description="Ribonuclease 3">
    <location>
        <begin position="1"/>
        <end position="233"/>
    </location>
</feature>
<feature type="domain" description="RNase III" evidence="1">
    <location>
        <begin position="4"/>
        <end position="126"/>
    </location>
</feature>
<feature type="domain" description="DRBM" evidence="1">
    <location>
        <begin position="153"/>
        <end position="222"/>
    </location>
</feature>
<feature type="active site" evidence="1">
    <location>
        <position position="43"/>
    </location>
</feature>
<feature type="active site" evidence="1">
    <location>
        <position position="115"/>
    </location>
</feature>
<feature type="binding site" evidence="1">
    <location>
        <position position="39"/>
    </location>
    <ligand>
        <name>Mg(2+)</name>
        <dbReference type="ChEBI" id="CHEBI:18420"/>
    </ligand>
</feature>
<feature type="binding site" evidence="1">
    <location>
        <position position="112"/>
    </location>
    <ligand>
        <name>Mg(2+)</name>
        <dbReference type="ChEBI" id="CHEBI:18420"/>
    </ligand>
</feature>
<feature type="binding site" evidence="1">
    <location>
        <position position="115"/>
    </location>
    <ligand>
        <name>Mg(2+)</name>
        <dbReference type="ChEBI" id="CHEBI:18420"/>
    </ligand>
</feature>
<feature type="sequence conflict" description="In Ref. 1; AAA69690." evidence="2" ref="1">
    <original>A</original>
    <variation>T</variation>
    <location>
        <position position="116"/>
    </location>
</feature>
<protein>
    <recommendedName>
        <fullName evidence="1">Ribonuclease 3</fullName>
        <ecNumber evidence="1">3.1.26.3</ecNumber>
    </recommendedName>
    <alternativeName>
        <fullName evidence="1">Ribonuclease III</fullName>
        <shortName evidence="1">RNase III</shortName>
    </alternativeName>
</protein>
<dbReference type="EC" id="3.1.26.3" evidence="1"/>
<dbReference type="EMBL" id="L27436">
    <property type="protein sequence ID" value="AAA69690.1"/>
    <property type="molecule type" value="Genomic_DNA"/>
</dbReference>
<dbReference type="EMBL" id="AE016828">
    <property type="protein sequence ID" value="AAO91000.1"/>
    <property type="molecule type" value="Genomic_DNA"/>
</dbReference>
<dbReference type="PIR" id="S60767">
    <property type="entry name" value="S60767"/>
</dbReference>
<dbReference type="RefSeq" id="NP_820486.1">
    <property type="nucleotide sequence ID" value="NC_002971.3"/>
</dbReference>
<dbReference type="RefSeq" id="WP_010958268.1">
    <property type="nucleotide sequence ID" value="NC_002971.4"/>
</dbReference>
<dbReference type="SMR" id="P51837"/>
<dbReference type="STRING" id="227377.CBU_1503"/>
<dbReference type="EnsemblBacteria" id="AAO91000">
    <property type="protein sequence ID" value="AAO91000"/>
    <property type="gene ID" value="CBU_1503"/>
</dbReference>
<dbReference type="GeneID" id="1209413"/>
<dbReference type="KEGG" id="cbu:CBU_1503"/>
<dbReference type="PATRIC" id="fig|227377.7.peg.1505"/>
<dbReference type="eggNOG" id="COG0571">
    <property type="taxonomic scope" value="Bacteria"/>
</dbReference>
<dbReference type="HOGENOM" id="CLU_000907_1_1_6"/>
<dbReference type="OrthoDB" id="9805026at2"/>
<dbReference type="Proteomes" id="UP000002671">
    <property type="component" value="Chromosome"/>
</dbReference>
<dbReference type="GO" id="GO:0005829">
    <property type="term" value="C:cytosol"/>
    <property type="evidence" value="ECO:0000318"/>
    <property type="project" value="GO_Central"/>
</dbReference>
<dbReference type="GO" id="GO:0003725">
    <property type="term" value="F:double-stranded RNA binding"/>
    <property type="evidence" value="ECO:0000318"/>
    <property type="project" value="GO_Central"/>
</dbReference>
<dbReference type="GO" id="GO:0046872">
    <property type="term" value="F:metal ion binding"/>
    <property type="evidence" value="ECO:0007669"/>
    <property type="project" value="UniProtKB-KW"/>
</dbReference>
<dbReference type="GO" id="GO:0004525">
    <property type="term" value="F:ribonuclease III activity"/>
    <property type="evidence" value="ECO:0000318"/>
    <property type="project" value="GO_Central"/>
</dbReference>
<dbReference type="GO" id="GO:0019843">
    <property type="term" value="F:rRNA binding"/>
    <property type="evidence" value="ECO:0007669"/>
    <property type="project" value="UniProtKB-KW"/>
</dbReference>
<dbReference type="GO" id="GO:0006397">
    <property type="term" value="P:mRNA processing"/>
    <property type="evidence" value="ECO:0007669"/>
    <property type="project" value="UniProtKB-UniRule"/>
</dbReference>
<dbReference type="GO" id="GO:0010468">
    <property type="term" value="P:regulation of gene expression"/>
    <property type="evidence" value="ECO:0000318"/>
    <property type="project" value="GO_Central"/>
</dbReference>
<dbReference type="GO" id="GO:0006396">
    <property type="term" value="P:RNA processing"/>
    <property type="evidence" value="ECO:0000318"/>
    <property type="project" value="GO_Central"/>
</dbReference>
<dbReference type="GO" id="GO:0006364">
    <property type="term" value="P:rRNA processing"/>
    <property type="evidence" value="ECO:0007669"/>
    <property type="project" value="UniProtKB-UniRule"/>
</dbReference>
<dbReference type="GO" id="GO:0008033">
    <property type="term" value="P:tRNA processing"/>
    <property type="evidence" value="ECO:0007669"/>
    <property type="project" value="UniProtKB-KW"/>
</dbReference>
<dbReference type="CDD" id="cd10845">
    <property type="entry name" value="DSRM_RNAse_III_family"/>
    <property type="match status" value="1"/>
</dbReference>
<dbReference type="CDD" id="cd00593">
    <property type="entry name" value="RIBOc"/>
    <property type="match status" value="1"/>
</dbReference>
<dbReference type="FunFam" id="1.10.1520.10:FF:000001">
    <property type="entry name" value="Ribonuclease 3"/>
    <property type="match status" value="1"/>
</dbReference>
<dbReference type="FunFam" id="3.30.160.20:FF:000003">
    <property type="entry name" value="Ribonuclease 3"/>
    <property type="match status" value="1"/>
</dbReference>
<dbReference type="Gene3D" id="3.30.160.20">
    <property type="match status" value="1"/>
</dbReference>
<dbReference type="Gene3D" id="1.10.1520.10">
    <property type="entry name" value="Ribonuclease III domain"/>
    <property type="match status" value="1"/>
</dbReference>
<dbReference type="HAMAP" id="MF_00104">
    <property type="entry name" value="RNase_III"/>
    <property type="match status" value="1"/>
</dbReference>
<dbReference type="InterPro" id="IPR014720">
    <property type="entry name" value="dsRBD_dom"/>
</dbReference>
<dbReference type="InterPro" id="IPR011907">
    <property type="entry name" value="RNase_III"/>
</dbReference>
<dbReference type="InterPro" id="IPR000999">
    <property type="entry name" value="RNase_III_dom"/>
</dbReference>
<dbReference type="InterPro" id="IPR036389">
    <property type="entry name" value="RNase_III_sf"/>
</dbReference>
<dbReference type="NCBIfam" id="TIGR02191">
    <property type="entry name" value="RNaseIII"/>
    <property type="match status" value="1"/>
</dbReference>
<dbReference type="PANTHER" id="PTHR11207:SF0">
    <property type="entry name" value="RIBONUCLEASE 3"/>
    <property type="match status" value="1"/>
</dbReference>
<dbReference type="PANTHER" id="PTHR11207">
    <property type="entry name" value="RIBONUCLEASE III"/>
    <property type="match status" value="1"/>
</dbReference>
<dbReference type="Pfam" id="PF00035">
    <property type="entry name" value="dsrm"/>
    <property type="match status" value="1"/>
</dbReference>
<dbReference type="Pfam" id="PF14622">
    <property type="entry name" value="Ribonucleas_3_3"/>
    <property type="match status" value="1"/>
</dbReference>
<dbReference type="SMART" id="SM00358">
    <property type="entry name" value="DSRM"/>
    <property type="match status" value="1"/>
</dbReference>
<dbReference type="SMART" id="SM00535">
    <property type="entry name" value="RIBOc"/>
    <property type="match status" value="1"/>
</dbReference>
<dbReference type="SUPFAM" id="SSF54768">
    <property type="entry name" value="dsRNA-binding domain-like"/>
    <property type="match status" value="1"/>
</dbReference>
<dbReference type="SUPFAM" id="SSF69065">
    <property type="entry name" value="RNase III domain-like"/>
    <property type="match status" value="1"/>
</dbReference>
<dbReference type="PROSITE" id="PS50137">
    <property type="entry name" value="DS_RBD"/>
    <property type="match status" value="1"/>
</dbReference>
<dbReference type="PROSITE" id="PS00517">
    <property type="entry name" value="RNASE_3_1"/>
    <property type="match status" value="1"/>
</dbReference>
<dbReference type="PROSITE" id="PS50142">
    <property type="entry name" value="RNASE_3_2"/>
    <property type="match status" value="1"/>
</dbReference>
<organism>
    <name type="scientific">Coxiella burnetii (strain RSA 493 / Nine Mile phase I)</name>
    <dbReference type="NCBI Taxonomy" id="227377"/>
    <lineage>
        <taxon>Bacteria</taxon>
        <taxon>Pseudomonadati</taxon>
        <taxon>Pseudomonadota</taxon>
        <taxon>Gammaproteobacteria</taxon>
        <taxon>Legionellales</taxon>
        <taxon>Coxiellaceae</taxon>
        <taxon>Coxiella</taxon>
    </lineage>
</organism>
<reference key="1">
    <citation type="journal article" date="1994" name="Mol. Microbiol.">
        <title>Analysis of the rnc locus of Coxiella burnetii.</title>
        <authorList>
            <person name="Zuber M."/>
            <person name="Hoover T.A."/>
            <person name="Powell B.S."/>
            <person name="Court D.L."/>
        </authorList>
    </citation>
    <scope>NUCLEOTIDE SEQUENCE [GENOMIC DNA]</scope>
    <source>
        <strain>CB9MIC7</strain>
    </source>
</reference>
<reference key="2">
    <citation type="journal article" date="2003" name="Proc. Natl. Acad. Sci. U.S.A.">
        <title>Complete genome sequence of the Q-fever pathogen, Coxiella burnetii.</title>
        <authorList>
            <person name="Seshadri R."/>
            <person name="Paulsen I.T."/>
            <person name="Eisen J.A."/>
            <person name="Read T.D."/>
            <person name="Nelson K.E."/>
            <person name="Nelson W.C."/>
            <person name="Ward N.L."/>
            <person name="Tettelin H."/>
            <person name="Davidsen T.M."/>
            <person name="Beanan M.J."/>
            <person name="DeBoy R.T."/>
            <person name="Daugherty S.C."/>
            <person name="Brinkac L.M."/>
            <person name="Madupu R."/>
            <person name="Dodson R.J."/>
            <person name="Khouri H.M."/>
            <person name="Lee K.H."/>
            <person name="Carty H.A."/>
            <person name="Scanlan D."/>
            <person name="Heinzen R.A."/>
            <person name="Thompson H.A."/>
            <person name="Samuel J.E."/>
            <person name="Fraser C.M."/>
            <person name="Heidelberg J.F."/>
        </authorList>
    </citation>
    <scope>NUCLEOTIDE SEQUENCE [LARGE SCALE GENOMIC DNA]</scope>
    <source>
        <strain>RSA 493 / Nine Mile phase I</strain>
    </source>
</reference>
<accession>P51837</accession>